<accession>Q39Z86</accession>
<comment type="function">
    <text evidence="1">Increases the formation of ribosomal termination complexes and stimulates activities of RF-1 and RF-2. It binds guanine nucleotides and has strong preference for UGA stop codons. It may interact directly with the ribosome. The stimulation of RF-1 and RF-2 is significantly reduced by GTP and GDP, but not by GMP.</text>
</comment>
<comment type="subcellular location">
    <subcellularLocation>
        <location evidence="1">Cytoplasm</location>
    </subcellularLocation>
</comment>
<comment type="similarity">
    <text evidence="1">Belongs to the TRAFAC class translation factor GTPase superfamily. Classic translation factor GTPase family. PrfC subfamily.</text>
</comment>
<gene>
    <name evidence="1" type="primary">prfC</name>
    <name type="ordered locus">Gmet_0192</name>
</gene>
<feature type="chain" id="PRO_0000242179" description="Peptide chain release factor 3">
    <location>
        <begin position="1"/>
        <end position="527"/>
    </location>
</feature>
<feature type="domain" description="tr-type G">
    <location>
        <begin position="10"/>
        <end position="278"/>
    </location>
</feature>
<feature type="binding site" evidence="1">
    <location>
        <begin position="19"/>
        <end position="26"/>
    </location>
    <ligand>
        <name>GTP</name>
        <dbReference type="ChEBI" id="CHEBI:37565"/>
    </ligand>
</feature>
<feature type="binding site" evidence="1">
    <location>
        <begin position="87"/>
        <end position="91"/>
    </location>
    <ligand>
        <name>GTP</name>
        <dbReference type="ChEBI" id="CHEBI:37565"/>
    </ligand>
</feature>
<feature type="binding site" evidence="1">
    <location>
        <begin position="141"/>
        <end position="144"/>
    </location>
    <ligand>
        <name>GTP</name>
        <dbReference type="ChEBI" id="CHEBI:37565"/>
    </ligand>
</feature>
<dbReference type="EMBL" id="CP000148">
    <property type="protein sequence ID" value="ABB30438.1"/>
    <property type="molecule type" value="Genomic_DNA"/>
</dbReference>
<dbReference type="RefSeq" id="WP_011365632.1">
    <property type="nucleotide sequence ID" value="NC_007517.1"/>
</dbReference>
<dbReference type="SMR" id="Q39Z86"/>
<dbReference type="STRING" id="269799.Gmet_0192"/>
<dbReference type="KEGG" id="gme:Gmet_0192"/>
<dbReference type="eggNOG" id="COG4108">
    <property type="taxonomic scope" value="Bacteria"/>
</dbReference>
<dbReference type="HOGENOM" id="CLU_002794_2_1_7"/>
<dbReference type="Proteomes" id="UP000007073">
    <property type="component" value="Chromosome"/>
</dbReference>
<dbReference type="GO" id="GO:0005829">
    <property type="term" value="C:cytosol"/>
    <property type="evidence" value="ECO:0007669"/>
    <property type="project" value="TreeGrafter"/>
</dbReference>
<dbReference type="GO" id="GO:0005525">
    <property type="term" value="F:GTP binding"/>
    <property type="evidence" value="ECO:0007669"/>
    <property type="project" value="UniProtKB-UniRule"/>
</dbReference>
<dbReference type="GO" id="GO:0003924">
    <property type="term" value="F:GTPase activity"/>
    <property type="evidence" value="ECO:0007669"/>
    <property type="project" value="InterPro"/>
</dbReference>
<dbReference type="GO" id="GO:0016150">
    <property type="term" value="F:translation release factor activity, codon nonspecific"/>
    <property type="evidence" value="ECO:0007669"/>
    <property type="project" value="TreeGrafter"/>
</dbReference>
<dbReference type="GO" id="GO:0016149">
    <property type="term" value="F:translation release factor activity, codon specific"/>
    <property type="evidence" value="ECO:0007669"/>
    <property type="project" value="UniProtKB-UniRule"/>
</dbReference>
<dbReference type="GO" id="GO:0006449">
    <property type="term" value="P:regulation of translational termination"/>
    <property type="evidence" value="ECO:0007669"/>
    <property type="project" value="UniProtKB-UniRule"/>
</dbReference>
<dbReference type="CDD" id="cd04169">
    <property type="entry name" value="RF3"/>
    <property type="match status" value="1"/>
</dbReference>
<dbReference type="CDD" id="cd03689">
    <property type="entry name" value="RF3_II"/>
    <property type="match status" value="1"/>
</dbReference>
<dbReference type="CDD" id="cd16259">
    <property type="entry name" value="RF3_III"/>
    <property type="match status" value="1"/>
</dbReference>
<dbReference type="FunFam" id="3.30.70.3280:FF:000001">
    <property type="entry name" value="Peptide chain release factor 3"/>
    <property type="match status" value="1"/>
</dbReference>
<dbReference type="FunFam" id="3.40.50.300:FF:000542">
    <property type="entry name" value="Peptide chain release factor 3"/>
    <property type="match status" value="1"/>
</dbReference>
<dbReference type="Gene3D" id="3.40.50.300">
    <property type="entry name" value="P-loop containing nucleotide triphosphate hydrolases"/>
    <property type="match status" value="2"/>
</dbReference>
<dbReference type="Gene3D" id="3.30.70.3280">
    <property type="entry name" value="Peptide chain release factor 3, domain III"/>
    <property type="match status" value="1"/>
</dbReference>
<dbReference type="HAMAP" id="MF_00072">
    <property type="entry name" value="Rel_fac_3"/>
    <property type="match status" value="1"/>
</dbReference>
<dbReference type="InterPro" id="IPR053905">
    <property type="entry name" value="EF-G-like_DII"/>
</dbReference>
<dbReference type="InterPro" id="IPR035647">
    <property type="entry name" value="EFG_III/V"/>
</dbReference>
<dbReference type="InterPro" id="IPR031157">
    <property type="entry name" value="G_TR_CS"/>
</dbReference>
<dbReference type="InterPro" id="IPR027417">
    <property type="entry name" value="P-loop_NTPase"/>
</dbReference>
<dbReference type="InterPro" id="IPR004548">
    <property type="entry name" value="PrfC"/>
</dbReference>
<dbReference type="InterPro" id="IPR032090">
    <property type="entry name" value="RF3_C"/>
</dbReference>
<dbReference type="InterPro" id="IPR038467">
    <property type="entry name" value="RF3_dom_3_sf"/>
</dbReference>
<dbReference type="InterPro" id="IPR041732">
    <property type="entry name" value="RF3_GTP-bd"/>
</dbReference>
<dbReference type="InterPro" id="IPR005225">
    <property type="entry name" value="Small_GTP-bd"/>
</dbReference>
<dbReference type="InterPro" id="IPR000795">
    <property type="entry name" value="T_Tr_GTP-bd_dom"/>
</dbReference>
<dbReference type="InterPro" id="IPR009000">
    <property type="entry name" value="Transl_B-barrel_sf"/>
</dbReference>
<dbReference type="NCBIfam" id="TIGR00503">
    <property type="entry name" value="prfC"/>
    <property type="match status" value="1"/>
</dbReference>
<dbReference type="NCBIfam" id="NF001964">
    <property type="entry name" value="PRK00741.1"/>
    <property type="match status" value="1"/>
</dbReference>
<dbReference type="NCBIfam" id="TIGR00231">
    <property type="entry name" value="small_GTP"/>
    <property type="match status" value="1"/>
</dbReference>
<dbReference type="PANTHER" id="PTHR43556">
    <property type="entry name" value="PEPTIDE CHAIN RELEASE FACTOR RF3"/>
    <property type="match status" value="1"/>
</dbReference>
<dbReference type="PANTHER" id="PTHR43556:SF2">
    <property type="entry name" value="PEPTIDE CHAIN RELEASE FACTOR RF3"/>
    <property type="match status" value="1"/>
</dbReference>
<dbReference type="Pfam" id="PF22042">
    <property type="entry name" value="EF-G_D2"/>
    <property type="match status" value="1"/>
</dbReference>
<dbReference type="Pfam" id="PF00009">
    <property type="entry name" value="GTP_EFTU"/>
    <property type="match status" value="1"/>
</dbReference>
<dbReference type="Pfam" id="PF16658">
    <property type="entry name" value="RF3_C"/>
    <property type="match status" value="1"/>
</dbReference>
<dbReference type="PRINTS" id="PR00315">
    <property type="entry name" value="ELONGATNFCT"/>
</dbReference>
<dbReference type="SUPFAM" id="SSF54980">
    <property type="entry name" value="EF-G C-terminal domain-like"/>
    <property type="match status" value="1"/>
</dbReference>
<dbReference type="SUPFAM" id="SSF52540">
    <property type="entry name" value="P-loop containing nucleoside triphosphate hydrolases"/>
    <property type="match status" value="1"/>
</dbReference>
<dbReference type="SUPFAM" id="SSF50447">
    <property type="entry name" value="Translation proteins"/>
    <property type="match status" value="1"/>
</dbReference>
<dbReference type="PROSITE" id="PS00301">
    <property type="entry name" value="G_TR_1"/>
    <property type="match status" value="1"/>
</dbReference>
<dbReference type="PROSITE" id="PS51722">
    <property type="entry name" value="G_TR_2"/>
    <property type="match status" value="1"/>
</dbReference>
<organism>
    <name type="scientific">Geobacter metallireducens (strain ATCC 53774 / DSM 7210 / GS-15)</name>
    <dbReference type="NCBI Taxonomy" id="269799"/>
    <lineage>
        <taxon>Bacteria</taxon>
        <taxon>Pseudomonadati</taxon>
        <taxon>Thermodesulfobacteriota</taxon>
        <taxon>Desulfuromonadia</taxon>
        <taxon>Geobacterales</taxon>
        <taxon>Geobacteraceae</taxon>
        <taxon>Geobacter</taxon>
    </lineage>
</organism>
<reference key="1">
    <citation type="journal article" date="2009" name="BMC Microbiol.">
        <title>The genome sequence of Geobacter metallireducens: features of metabolism, physiology and regulation common and dissimilar to Geobacter sulfurreducens.</title>
        <authorList>
            <person name="Aklujkar M."/>
            <person name="Krushkal J."/>
            <person name="DiBartolo G."/>
            <person name="Lapidus A."/>
            <person name="Land M.L."/>
            <person name="Lovley D.R."/>
        </authorList>
    </citation>
    <scope>NUCLEOTIDE SEQUENCE [LARGE SCALE GENOMIC DNA]</scope>
    <source>
        <strain>ATCC 53774 / DSM 7210 / GS-15</strain>
    </source>
</reference>
<evidence type="ECO:0000255" key="1">
    <source>
        <dbReference type="HAMAP-Rule" id="MF_00072"/>
    </source>
</evidence>
<sequence length="527" mass="59517">MTKHNEQEIDRRRTFAIISHPDAGKTTITEKLLLFGGAIQQAGEVRARKAARHATSDWMEMEKQRGISVTSSVMKFTYRNYEVNLLDTPGHNDFSEDTYRVLTAVDSALMVIDAVKGVESQTIKLLDVCRLRHTPIMTFVNKLDREGRDPFELIDEIEKVLKIQCAPMTWPIGMGKRFRGTYHLYTKELIIFDAEAERGTGSIVSLSGLDDPRLDEILGSQAAELRGDIELLEGAAHPFEEEAYLAGLQTPVFFGSAINTFGVQQLLDTFVENAPAPLPREAVTRTVSPYEEPFAAFAFKIQANMDPAHRDRIAFFRICSGKFTRGMKVRHVRLGREVAINNATIFMAQDRTHVDEAFPGDIIGIHNHGTIKIGDTFTMGEELKFTGIPNFAPEHFRKVRLLDPLKSKALEKGLTQLAEEGTTQVFRPLMGADWIVGAVGILQFDVVMHRLEHEYNVKATYEPAAYATARWVTGEKKKLEEFQKKEVMSCYIDGEGNLAYLASSQWRLDNTMDNWKDLQFHATREHS</sequence>
<keyword id="KW-0963">Cytoplasm</keyword>
<keyword id="KW-0342">GTP-binding</keyword>
<keyword id="KW-0547">Nucleotide-binding</keyword>
<keyword id="KW-0648">Protein biosynthesis</keyword>
<keyword id="KW-1185">Reference proteome</keyword>
<proteinExistence type="inferred from homology"/>
<name>RF3_GEOMG</name>
<protein>
    <recommendedName>
        <fullName evidence="1">Peptide chain release factor 3</fullName>
        <shortName evidence="1">RF-3</shortName>
    </recommendedName>
</protein>